<evidence type="ECO:0000255" key="1">
    <source>
        <dbReference type="HAMAP-Rule" id="MF_00821"/>
    </source>
</evidence>
<protein>
    <recommendedName>
        <fullName evidence="1">Protein-export protein SecB</fullName>
    </recommendedName>
</protein>
<sequence length="171" mass="19458">MTEKNQDAVTEEQGTEVVLQIQRIYVKDVSFEAPNLPHIFQQEWKPKLDFNLSTETTHLAEDLYEVCLNISVETTMEGSEDVAFICEVKQAGIFAISGLEDVQLAHCLTSQCPNMLFPYARELISSLVNRGTFPALNLAPVNFDALFVEYMQRQQAQEESKAEEKEKKEVH</sequence>
<comment type="function">
    <text evidence="1">One of the proteins required for the normal export of preproteins out of the cell cytoplasm. It is a molecular chaperone that binds to a subset of precursor proteins, maintaining them in a translocation-competent state. It also specifically binds to its receptor SecA.</text>
</comment>
<comment type="subunit">
    <text evidence="1">Homotetramer, a dimer of dimers. One homotetramer interacts with 1 SecA dimer.</text>
</comment>
<comment type="subcellular location">
    <subcellularLocation>
        <location evidence="1">Cytoplasm</location>
    </subcellularLocation>
</comment>
<comment type="similarity">
    <text evidence="1">Belongs to the SecB family.</text>
</comment>
<gene>
    <name evidence="1" type="primary">secB</name>
    <name type="ordered locus">HS_0156</name>
</gene>
<feature type="chain" id="PRO_1000062478" description="Protein-export protein SecB">
    <location>
        <begin position="1"/>
        <end position="171"/>
    </location>
</feature>
<proteinExistence type="inferred from homology"/>
<organism>
    <name type="scientific">Histophilus somni (strain 129Pt)</name>
    <name type="common">Haemophilus somnus</name>
    <dbReference type="NCBI Taxonomy" id="205914"/>
    <lineage>
        <taxon>Bacteria</taxon>
        <taxon>Pseudomonadati</taxon>
        <taxon>Pseudomonadota</taxon>
        <taxon>Gammaproteobacteria</taxon>
        <taxon>Pasteurellales</taxon>
        <taxon>Pasteurellaceae</taxon>
        <taxon>Histophilus</taxon>
    </lineage>
</organism>
<keyword id="KW-0143">Chaperone</keyword>
<keyword id="KW-0963">Cytoplasm</keyword>
<keyword id="KW-0653">Protein transport</keyword>
<keyword id="KW-0811">Translocation</keyword>
<keyword id="KW-0813">Transport</keyword>
<accession>Q0I0W6</accession>
<name>SECB_HISS1</name>
<dbReference type="EMBL" id="CP000436">
    <property type="protein sequence ID" value="ABI24434.1"/>
    <property type="molecule type" value="Genomic_DNA"/>
</dbReference>
<dbReference type="SMR" id="Q0I0W6"/>
<dbReference type="KEGG" id="hso:HS_0156"/>
<dbReference type="eggNOG" id="COG1952">
    <property type="taxonomic scope" value="Bacteria"/>
</dbReference>
<dbReference type="HOGENOM" id="CLU_111574_1_0_6"/>
<dbReference type="GO" id="GO:0005737">
    <property type="term" value="C:cytoplasm"/>
    <property type="evidence" value="ECO:0007669"/>
    <property type="project" value="UniProtKB-SubCell"/>
</dbReference>
<dbReference type="GO" id="GO:0051082">
    <property type="term" value="F:unfolded protein binding"/>
    <property type="evidence" value="ECO:0007669"/>
    <property type="project" value="InterPro"/>
</dbReference>
<dbReference type="GO" id="GO:0006457">
    <property type="term" value="P:protein folding"/>
    <property type="evidence" value="ECO:0007669"/>
    <property type="project" value="UniProtKB-UniRule"/>
</dbReference>
<dbReference type="GO" id="GO:0051262">
    <property type="term" value="P:protein tetramerization"/>
    <property type="evidence" value="ECO:0007669"/>
    <property type="project" value="InterPro"/>
</dbReference>
<dbReference type="GO" id="GO:0015031">
    <property type="term" value="P:protein transport"/>
    <property type="evidence" value="ECO:0007669"/>
    <property type="project" value="UniProtKB-UniRule"/>
</dbReference>
<dbReference type="CDD" id="cd00557">
    <property type="entry name" value="Translocase_SecB"/>
    <property type="match status" value="1"/>
</dbReference>
<dbReference type="Gene3D" id="3.10.420.10">
    <property type="entry name" value="SecB-like"/>
    <property type="match status" value="1"/>
</dbReference>
<dbReference type="HAMAP" id="MF_00821">
    <property type="entry name" value="SecB"/>
    <property type="match status" value="1"/>
</dbReference>
<dbReference type="InterPro" id="IPR003708">
    <property type="entry name" value="SecB"/>
</dbReference>
<dbReference type="InterPro" id="IPR035958">
    <property type="entry name" value="SecB-like_sf"/>
</dbReference>
<dbReference type="NCBIfam" id="NF004393">
    <property type="entry name" value="PRK05751.1-4"/>
    <property type="match status" value="1"/>
</dbReference>
<dbReference type="NCBIfam" id="TIGR00809">
    <property type="entry name" value="secB"/>
    <property type="match status" value="1"/>
</dbReference>
<dbReference type="PANTHER" id="PTHR36918">
    <property type="match status" value="1"/>
</dbReference>
<dbReference type="PANTHER" id="PTHR36918:SF1">
    <property type="entry name" value="PROTEIN-EXPORT PROTEIN SECB"/>
    <property type="match status" value="1"/>
</dbReference>
<dbReference type="Pfam" id="PF02556">
    <property type="entry name" value="SecB"/>
    <property type="match status" value="1"/>
</dbReference>
<dbReference type="PRINTS" id="PR01594">
    <property type="entry name" value="SECBCHAPRONE"/>
</dbReference>
<dbReference type="SUPFAM" id="SSF54611">
    <property type="entry name" value="SecB-like"/>
    <property type="match status" value="1"/>
</dbReference>
<reference key="1">
    <citation type="journal article" date="2007" name="J. Bacteriol.">
        <title>Complete genome sequence of Haemophilus somnus (Histophilus somni) strain 129Pt and comparison to Haemophilus ducreyi 35000HP and Haemophilus influenzae Rd.</title>
        <authorList>
            <person name="Challacombe J.F."/>
            <person name="Duncan A.J."/>
            <person name="Brettin T.S."/>
            <person name="Bruce D."/>
            <person name="Chertkov O."/>
            <person name="Detter J.C."/>
            <person name="Han C.S."/>
            <person name="Misra M."/>
            <person name="Richardson P."/>
            <person name="Tapia R."/>
            <person name="Thayer N."/>
            <person name="Xie G."/>
            <person name="Inzana T.J."/>
        </authorList>
    </citation>
    <scope>NUCLEOTIDE SEQUENCE [LARGE SCALE GENOMIC DNA]</scope>
    <source>
        <strain>129Pt</strain>
    </source>
</reference>